<dbReference type="EMBL" id="X67209">
    <property type="protein sequence ID" value="CAA47648.1"/>
    <property type="molecule type" value="mRNA"/>
</dbReference>
<dbReference type="EMBL" id="L03814">
    <property type="protein sequence ID" value="AAA39836.1"/>
    <property type="molecule type" value="mRNA"/>
</dbReference>
<dbReference type="EMBL" id="AK146466">
    <property type="protein sequence ID" value="BAE27193.1"/>
    <property type="molecule type" value="mRNA"/>
</dbReference>
<dbReference type="EMBL" id="AL732557">
    <property type="status" value="NOT_ANNOTATED_CDS"/>
    <property type="molecule type" value="Genomic_DNA"/>
</dbReference>
<dbReference type="EMBL" id="CH466542">
    <property type="protein sequence ID" value="EDL08243.1"/>
    <property type="molecule type" value="Genomic_DNA"/>
</dbReference>
<dbReference type="EMBL" id="BC003320">
    <property type="protein sequence ID" value="AAH03320.1"/>
    <property type="molecule type" value="mRNA"/>
</dbReference>
<dbReference type="CCDS" id="CCDS15771.1"/>
<dbReference type="PIR" id="I48691">
    <property type="entry name" value="I48691"/>
</dbReference>
<dbReference type="RefSeq" id="NP_032747.2">
    <property type="nucleotide sequence ID" value="NM_008721.4"/>
</dbReference>
<dbReference type="FunCoup" id="Q64322">
    <property type="interactions" value="280"/>
</dbReference>
<dbReference type="STRING" id="10090.ENSMUSP00000071387"/>
<dbReference type="GlyGen" id="Q64322">
    <property type="glycosylation" value="3 sites, 1 O-linked glycan (2 sites)"/>
</dbReference>
<dbReference type="iPTMnet" id="Q64322"/>
<dbReference type="PhosphoSitePlus" id="Q64322"/>
<dbReference type="SwissPalm" id="Q64322"/>
<dbReference type="PaxDb" id="10090-ENSMUSP00000071387"/>
<dbReference type="ProteomicsDB" id="293682"/>
<dbReference type="Pumba" id="Q64322"/>
<dbReference type="Antibodypedia" id="2177">
    <property type="antibodies" value="118 antibodies from 24 providers"/>
</dbReference>
<dbReference type="DNASU" id="18146"/>
<dbReference type="Ensembl" id="ENSMUST00000071442.12">
    <property type="protein sequence ID" value="ENSMUSP00000071387.6"/>
    <property type="gene ID" value="ENSMUSG00000015094.17"/>
</dbReference>
<dbReference type="GeneID" id="18146"/>
<dbReference type="KEGG" id="mmu:18146"/>
<dbReference type="UCSC" id="uc008irx.2">
    <property type="organism name" value="mouse"/>
</dbReference>
<dbReference type="AGR" id="MGI:1099802"/>
<dbReference type="CTD" id="56654"/>
<dbReference type="MGI" id="MGI:1099802">
    <property type="gene designation" value="Npdc1"/>
</dbReference>
<dbReference type="VEuPathDB" id="HostDB:ENSMUSG00000015094"/>
<dbReference type="eggNOG" id="KOG3884">
    <property type="taxonomic scope" value="Eukaryota"/>
</dbReference>
<dbReference type="GeneTree" id="ENSGT00440000038604"/>
<dbReference type="HOGENOM" id="CLU_058246_0_1_1"/>
<dbReference type="InParanoid" id="Q64322"/>
<dbReference type="OrthoDB" id="66582at9989"/>
<dbReference type="TreeFam" id="TF318443"/>
<dbReference type="Reactome" id="R-MMU-198933">
    <property type="pathway name" value="Immunoregulatory interactions between a Lymphoid and a non-Lymphoid cell"/>
</dbReference>
<dbReference type="BioGRID-ORCS" id="18146">
    <property type="hits" value="2 hits in 63 CRISPR screens"/>
</dbReference>
<dbReference type="ChiTaRS" id="Npdc1">
    <property type="organism name" value="mouse"/>
</dbReference>
<dbReference type="PRO" id="PR:Q64322"/>
<dbReference type="Proteomes" id="UP000000589">
    <property type="component" value="Chromosome 2"/>
</dbReference>
<dbReference type="RNAct" id="Q64322">
    <property type="molecule type" value="protein"/>
</dbReference>
<dbReference type="Bgee" id="ENSMUSG00000015094">
    <property type="expression patterns" value="Expressed in cortical plate and 246 other cell types or tissues"/>
</dbReference>
<dbReference type="ExpressionAtlas" id="Q64322">
    <property type="expression patterns" value="baseline and differential"/>
</dbReference>
<dbReference type="GO" id="GO:0016020">
    <property type="term" value="C:membrane"/>
    <property type="evidence" value="ECO:0007669"/>
    <property type="project" value="UniProtKB-SubCell"/>
</dbReference>
<dbReference type="InterPro" id="IPR009635">
    <property type="entry name" value="NPDC1"/>
</dbReference>
<dbReference type="PANTHER" id="PTHR23352:SF2">
    <property type="entry name" value="NEURAL PROLIFERATION DIFFERENTIATION AND CONTROL PROTEIN 1"/>
    <property type="match status" value="1"/>
</dbReference>
<dbReference type="PANTHER" id="PTHR23352">
    <property type="entry name" value="NEURAL PROLIFERATION DIFFERENTIATION AND CONTROL PROTEIN-1 NPDC-1 PROTEIN"/>
    <property type="match status" value="1"/>
</dbReference>
<dbReference type="Pfam" id="PF06809">
    <property type="entry name" value="NPDC1"/>
    <property type="match status" value="1"/>
</dbReference>
<gene>
    <name type="primary">Npdc1</name>
    <name type="synonym">Npdc-1</name>
</gene>
<evidence type="ECO:0000250" key="1">
    <source>
        <dbReference type="UniProtKB" id="Q9NQX5"/>
    </source>
</evidence>
<evidence type="ECO:0000255" key="2"/>
<evidence type="ECO:0000256" key="3">
    <source>
        <dbReference type="SAM" id="MobiDB-lite"/>
    </source>
</evidence>
<evidence type="ECO:0000305" key="4"/>
<sequence>MATPVPPPSPRHLRLLRLLLSGLILGAALNGATARRPDATTCPGSLDCALKRRAKCPPGAHACGPCLQSFQEDQRGFCVPRKHLSSGEGLPQPRLEEEIDSLAQELALKEKEAGHSRLTAQPLLEAAQKLLEPAATLGFSQWGQRLEPGLPSTHGTSSPIPHTSLSSRASSGPVQMSPLEPQGRHGNGLTLVLILAFCLASSAALAVAALCWCRLQREIRLTQKADYAATAKGPTSPSTPRISPGDQRLAHSAEMYHYQHQRQQMLCLERHKEPPKELESASSDEENEDGDFTVYECPGLAPTGEMEVRNPLFDHSTLSAPVPGPHSLPPLQ</sequence>
<protein>
    <recommendedName>
        <fullName>Neural proliferation differentiation and control protein 1</fullName>
        <shortName>NPDC-1</shortName>
    </recommendedName>
</protein>
<name>NPDC1_MOUSE</name>
<proteinExistence type="evidence at transcript level"/>
<accession>Q64322</accession>
<accession>Q99J69</accession>
<keyword id="KW-0472">Membrane</keyword>
<keyword id="KW-0597">Phosphoprotein</keyword>
<keyword id="KW-1185">Reference proteome</keyword>
<keyword id="KW-0732">Signal</keyword>
<keyword id="KW-0812">Transmembrane</keyword>
<keyword id="KW-1133">Transmembrane helix</keyword>
<organism>
    <name type="scientific">Mus musculus</name>
    <name type="common">Mouse</name>
    <dbReference type="NCBI Taxonomy" id="10090"/>
    <lineage>
        <taxon>Eukaryota</taxon>
        <taxon>Metazoa</taxon>
        <taxon>Chordata</taxon>
        <taxon>Craniata</taxon>
        <taxon>Vertebrata</taxon>
        <taxon>Euteleostomi</taxon>
        <taxon>Mammalia</taxon>
        <taxon>Eutheria</taxon>
        <taxon>Euarchontoglires</taxon>
        <taxon>Glires</taxon>
        <taxon>Rodentia</taxon>
        <taxon>Myomorpha</taxon>
        <taxon>Muroidea</taxon>
        <taxon>Muridae</taxon>
        <taxon>Murinae</taxon>
        <taxon>Mus</taxon>
        <taxon>Mus</taxon>
    </lineage>
</organism>
<reference key="1">
    <citation type="journal article" date="1993" name="J. Neurosci. Res.">
        <title>Proliferation and differentiation properties of bipotent glial progenitor cell lines immortalized with the adenovirus E1A gene.</title>
        <authorList>
            <person name="Galiana E."/>
            <person name="Bernard R."/>
            <person name="Borde I."/>
            <person name="Rouget P."/>
            <person name="Evrard C."/>
        </authorList>
    </citation>
    <scope>NUCLEOTIDE SEQUENCE [MRNA]</scope>
    <source>
        <strain>BALB/cJ</strain>
    </source>
</reference>
<reference key="2">
    <citation type="journal article" date="1995" name="Proc. Natl. Acad. Sci. U.S.A.">
        <title>Identification of a neural-specific cDNA, NPDC-1, able to down-regulate cell proliferation and to suppress transformation.</title>
        <authorList>
            <person name="Galiana E."/>
            <person name="Vernier P."/>
            <person name="Dupont E."/>
            <person name="Evrard C."/>
            <person name="Rouget P."/>
        </authorList>
    </citation>
    <scope>NUCLEOTIDE SEQUENCE [MRNA]</scope>
    <source>
        <tissue>Brain</tissue>
    </source>
</reference>
<reference key="3">
    <citation type="journal article" date="2005" name="Science">
        <title>The transcriptional landscape of the mammalian genome.</title>
        <authorList>
            <person name="Carninci P."/>
            <person name="Kasukawa T."/>
            <person name="Katayama S."/>
            <person name="Gough J."/>
            <person name="Frith M.C."/>
            <person name="Maeda N."/>
            <person name="Oyama R."/>
            <person name="Ravasi T."/>
            <person name="Lenhard B."/>
            <person name="Wells C."/>
            <person name="Kodzius R."/>
            <person name="Shimokawa K."/>
            <person name="Bajic V.B."/>
            <person name="Brenner S.E."/>
            <person name="Batalov S."/>
            <person name="Forrest A.R."/>
            <person name="Zavolan M."/>
            <person name="Davis M.J."/>
            <person name="Wilming L.G."/>
            <person name="Aidinis V."/>
            <person name="Allen J.E."/>
            <person name="Ambesi-Impiombato A."/>
            <person name="Apweiler R."/>
            <person name="Aturaliya R.N."/>
            <person name="Bailey T.L."/>
            <person name="Bansal M."/>
            <person name="Baxter L."/>
            <person name="Beisel K.W."/>
            <person name="Bersano T."/>
            <person name="Bono H."/>
            <person name="Chalk A.M."/>
            <person name="Chiu K.P."/>
            <person name="Choudhary V."/>
            <person name="Christoffels A."/>
            <person name="Clutterbuck D.R."/>
            <person name="Crowe M.L."/>
            <person name="Dalla E."/>
            <person name="Dalrymple B.P."/>
            <person name="de Bono B."/>
            <person name="Della Gatta G."/>
            <person name="di Bernardo D."/>
            <person name="Down T."/>
            <person name="Engstrom P."/>
            <person name="Fagiolini M."/>
            <person name="Faulkner G."/>
            <person name="Fletcher C.F."/>
            <person name="Fukushima T."/>
            <person name="Furuno M."/>
            <person name="Futaki S."/>
            <person name="Gariboldi M."/>
            <person name="Georgii-Hemming P."/>
            <person name="Gingeras T.R."/>
            <person name="Gojobori T."/>
            <person name="Green R.E."/>
            <person name="Gustincich S."/>
            <person name="Harbers M."/>
            <person name="Hayashi Y."/>
            <person name="Hensch T.K."/>
            <person name="Hirokawa N."/>
            <person name="Hill D."/>
            <person name="Huminiecki L."/>
            <person name="Iacono M."/>
            <person name="Ikeo K."/>
            <person name="Iwama A."/>
            <person name="Ishikawa T."/>
            <person name="Jakt M."/>
            <person name="Kanapin A."/>
            <person name="Katoh M."/>
            <person name="Kawasawa Y."/>
            <person name="Kelso J."/>
            <person name="Kitamura H."/>
            <person name="Kitano H."/>
            <person name="Kollias G."/>
            <person name="Krishnan S.P."/>
            <person name="Kruger A."/>
            <person name="Kummerfeld S.K."/>
            <person name="Kurochkin I.V."/>
            <person name="Lareau L.F."/>
            <person name="Lazarevic D."/>
            <person name="Lipovich L."/>
            <person name="Liu J."/>
            <person name="Liuni S."/>
            <person name="McWilliam S."/>
            <person name="Madan Babu M."/>
            <person name="Madera M."/>
            <person name="Marchionni L."/>
            <person name="Matsuda H."/>
            <person name="Matsuzawa S."/>
            <person name="Miki H."/>
            <person name="Mignone F."/>
            <person name="Miyake S."/>
            <person name="Morris K."/>
            <person name="Mottagui-Tabar S."/>
            <person name="Mulder N."/>
            <person name="Nakano N."/>
            <person name="Nakauchi H."/>
            <person name="Ng P."/>
            <person name="Nilsson R."/>
            <person name="Nishiguchi S."/>
            <person name="Nishikawa S."/>
            <person name="Nori F."/>
            <person name="Ohara O."/>
            <person name="Okazaki Y."/>
            <person name="Orlando V."/>
            <person name="Pang K.C."/>
            <person name="Pavan W.J."/>
            <person name="Pavesi G."/>
            <person name="Pesole G."/>
            <person name="Petrovsky N."/>
            <person name="Piazza S."/>
            <person name="Reed J."/>
            <person name="Reid J.F."/>
            <person name="Ring B.Z."/>
            <person name="Ringwald M."/>
            <person name="Rost B."/>
            <person name="Ruan Y."/>
            <person name="Salzberg S.L."/>
            <person name="Sandelin A."/>
            <person name="Schneider C."/>
            <person name="Schoenbach C."/>
            <person name="Sekiguchi K."/>
            <person name="Semple C.A."/>
            <person name="Seno S."/>
            <person name="Sessa L."/>
            <person name="Sheng Y."/>
            <person name="Shibata Y."/>
            <person name="Shimada H."/>
            <person name="Shimada K."/>
            <person name="Silva D."/>
            <person name="Sinclair B."/>
            <person name="Sperling S."/>
            <person name="Stupka E."/>
            <person name="Sugiura K."/>
            <person name="Sultana R."/>
            <person name="Takenaka Y."/>
            <person name="Taki K."/>
            <person name="Tammoja K."/>
            <person name="Tan S.L."/>
            <person name="Tang S."/>
            <person name="Taylor M.S."/>
            <person name="Tegner J."/>
            <person name="Teichmann S.A."/>
            <person name="Ueda H.R."/>
            <person name="van Nimwegen E."/>
            <person name="Verardo R."/>
            <person name="Wei C.L."/>
            <person name="Yagi K."/>
            <person name="Yamanishi H."/>
            <person name="Zabarovsky E."/>
            <person name="Zhu S."/>
            <person name="Zimmer A."/>
            <person name="Hide W."/>
            <person name="Bult C."/>
            <person name="Grimmond S.M."/>
            <person name="Teasdale R.D."/>
            <person name="Liu E.T."/>
            <person name="Brusic V."/>
            <person name="Quackenbush J."/>
            <person name="Wahlestedt C."/>
            <person name="Mattick J.S."/>
            <person name="Hume D.A."/>
            <person name="Kai C."/>
            <person name="Sasaki D."/>
            <person name="Tomaru Y."/>
            <person name="Fukuda S."/>
            <person name="Kanamori-Katayama M."/>
            <person name="Suzuki M."/>
            <person name="Aoki J."/>
            <person name="Arakawa T."/>
            <person name="Iida J."/>
            <person name="Imamura K."/>
            <person name="Itoh M."/>
            <person name="Kato T."/>
            <person name="Kawaji H."/>
            <person name="Kawagashira N."/>
            <person name="Kawashima T."/>
            <person name="Kojima M."/>
            <person name="Kondo S."/>
            <person name="Konno H."/>
            <person name="Nakano K."/>
            <person name="Ninomiya N."/>
            <person name="Nishio T."/>
            <person name="Okada M."/>
            <person name="Plessy C."/>
            <person name="Shibata K."/>
            <person name="Shiraki T."/>
            <person name="Suzuki S."/>
            <person name="Tagami M."/>
            <person name="Waki K."/>
            <person name="Watahiki A."/>
            <person name="Okamura-Oho Y."/>
            <person name="Suzuki H."/>
            <person name="Kawai J."/>
            <person name="Hayashizaki Y."/>
        </authorList>
    </citation>
    <scope>NUCLEOTIDE SEQUENCE [LARGE SCALE MRNA]</scope>
    <source>
        <strain>C57BL/6J</strain>
        <tissue>Kidney</tissue>
    </source>
</reference>
<reference key="4">
    <citation type="journal article" date="2009" name="PLoS Biol.">
        <title>Lineage-specific biology revealed by a finished genome assembly of the mouse.</title>
        <authorList>
            <person name="Church D.M."/>
            <person name="Goodstadt L."/>
            <person name="Hillier L.W."/>
            <person name="Zody M.C."/>
            <person name="Goldstein S."/>
            <person name="She X."/>
            <person name="Bult C.J."/>
            <person name="Agarwala R."/>
            <person name="Cherry J.L."/>
            <person name="DiCuccio M."/>
            <person name="Hlavina W."/>
            <person name="Kapustin Y."/>
            <person name="Meric P."/>
            <person name="Maglott D."/>
            <person name="Birtle Z."/>
            <person name="Marques A.C."/>
            <person name="Graves T."/>
            <person name="Zhou S."/>
            <person name="Teague B."/>
            <person name="Potamousis K."/>
            <person name="Churas C."/>
            <person name="Place M."/>
            <person name="Herschleb J."/>
            <person name="Runnheim R."/>
            <person name="Forrest D."/>
            <person name="Amos-Landgraf J."/>
            <person name="Schwartz D.C."/>
            <person name="Cheng Z."/>
            <person name="Lindblad-Toh K."/>
            <person name="Eichler E.E."/>
            <person name="Ponting C.P."/>
        </authorList>
    </citation>
    <scope>NUCLEOTIDE SEQUENCE [LARGE SCALE GENOMIC DNA]</scope>
    <source>
        <strain>C57BL/6J</strain>
    </source>
</reference>
<reference key="5">
    <citation type="submission" date="2005-07" db="EMBL/GenBank/DDBJ databases">
        <authorList>
            <person name="Mural R.J."/>
            <person name="Adams M.D."/>
            <person name="Myers E.W."/>
            <person name="Smith H.O."/>
            <person name="Venter J.C."/>
        </authorList>
    </citation>
    <scope>NUCLEOTIDE SEQUENCE [LARGE SCALE GENOMIC DNA]</scope>
</reference>
<reference key="6">
    <citation type="journal article" date="2004" name="Genome Res.">
        <title>The status, quality, and expansion of the NIH full-length cDNA project: the Mammalian Gene Collection (MGC).</title>
        <authorList>
            <consortium name="The MGC Project Team"/>
        </authorList>
    </citation>
    <scope>NUCLEOTIDE SEQUENCE [LARGE SCALE MRNA]</scope>
    <source>
        <strain>129</strain>
        <tissue>Mammary tumor</tissue>
    </source>
</reference>
<feature type="signal peptide" evidence="2">
    <location>
        <begin position="1"/>
        <end position="34"/>
    </location>
</feature>
<feature type="chain" id="PRO_0000021831" description="Neural proliferation differentiation and control protein 1">
    <location>
        <begin position="35"/>
        <end position="332"/>
    </location>
</feature>
<feature type="transmembrane region" description="Helical" evidence="2">
    <location>
        <begin position="191"/>
        <end position="211"/>
    </location>
</feature>
<feature type="region of interest" description="Disordered" evidence="3">
    <location>
        <begin position="145"/>
        <end position="182"/>
    </location>
</feature>
<feature type="region of interest" description="Disordered" evidence="3">
    <location>
        <begin position="272"/>
        <end position="300"/>
    </location>
</feature>
<feature type="region of interest" description="Disordered" evidence="3">
    <location>
        <begin position="312"/>
        <end position="332"/>
    </location>
</feature>
<feature type="compositionally biased region" description="Polar residues" evidence="3">
    <location>
        <begin position="153"/>
        <end position="174"/>
    </location>
</feature>
<feature type="compositionally biased region" description="Acidic residues" evidence="3">
    <location>
        <begin position="282"/>
        <end position="291"/>
    </location>
</feature>
<feature type="compositionally biased region" description="Pro residues" evidence="3">
    <location>
        <begin position="322"/>
        <end position="332"/>
    </location>
</feature>
<feature type="modified residue" description="Phosphoserine" evidence="1">
    <location>
        <position position="236"/>
    </location>
</feature>
<feature type="sequence conflict" description="In Ref. 1; CAA47648 and 2; AAA39836." evidence="4" ref="1 2">
    <original>A</original>
    <variation>R</variation>
    <location>
        <position position="126"/>
    </location>
</feature>
<comment type="function">
    <text>Suppresses oncogenic transformation in neural and non-neural cells and down-regulates neural cell proliferation. Might be involved in transcriptional regulation.</text>
</comment>
<comment type="subcellular location">
    <subcellularLocation>
        <location evidence="4">Membrane</location>
        <topology evidence="4">Single-pass membrane protein</topology>
    </subcellularLocation>
</comment>
<comment type="tissue specificity">
    <text>Expressed in the brain and nervous system. Not detected in liver, heart, skeletal muscle, spleen, pancreas, pituitary and adrenal glands. Expression increases when cultured neural cells are growth-arrested and begin to differentiate.</text>
</comment>
<comment type="similarity">
    <text evidence="4">Belongs to the NPDC1/cab-1 family.</text>
</comment>